<keyword id="KW-0687">Ribonucleoprotein</keyword>
<keyword id="KW-0689">Ribosomal protein</keyword>
<dbReference type="EMBL" id="CP001277">
    <property type="protein sequence ID" value="ACQ68503.1"/>
    <property type="molecule type" value="Genomic_DNA"/>
</dbReference>
<dbReference type="RefSeq" id="WP_015874265.1">
    <property type="nucleotide sequence ID" value="NC_012751.1"/>
</dbReference>
<dbReference type="SMR" id="C4K7G0"/>
<dbReference type="STRING" id="572265.HDEF_1914"/>
<dbReference type="GeneID" id="66261491"/>
<dbReference type="KEGG" id="hde:HDEF_1914"/>
<dbReference type="eggNOG" id="COG0227">
    <property type="taxonomic scope" value="Bacteria"/>
</dbReference>
<dbReference type="HOGENOM" id="CLU_064548_3_1_6"/>
<dbReference type="Proteomes" id="UP000002334">
    <property type="component" value="Chromosome"/>
</dbReference>
<dbReference type="GO" id="GO:0022625">
    <property type="term" value="C:cytosolic large ribosomal subunit"/>
    <property type="evidence" value="ECO:0007669"/>
    <property type="project" value="TreeGrafter"/>
</dbReference>
<dbReference type="GO" id="GO:0003735">
    <property type="term" value="F:structural constituent of ribosome"/>
    <property type="evidence" value="ECO:0007669"/>
    <property type="project" value="InterPro"/>
</dbReference>
<dbReference type="GO" id="GO:0006412">
    <property type="term" value="P:translation"/>
    <property type="evidence" value="ECO:0007669"/>
    <property type="project" value="UniProtKB-UniRule"/>
</dbReference>
<dbReference type="FunFam" id="2.30.170.40:FF:000001">
    <property type="entry name" value="50S ribosomal protein L28"/>
    <property type="match status" value="1"/>
</dbReference>
<dbReference type="Gene3D" id="2.30.170.40">
    <property type="entry name" value="Ribosomal protein L28/L24"/>
    <property type="match status" value="1"/>
</dbReference>
<dbReference type="HAMAP" id="MF_00373">
    <property type="entry name" value="Ribosomal_bL28"/>
    <property type="match status" value="1"/>
</dbReference>
<dbReference type="InterPro" id="IPR026569">
    <property type="entry name" value="Ribosomal_bL28"/>
</dbReference>
<dbReference type="InterPro" id="IPR034704">
    <property type="entry name" value="Ribosomal_bL28/bL31-like_sf"/>
</dbReference>
<dbReference type="InterPro" id="IPR001383">
    <property type="entry name" value="Ribosomal_bL28_bact-type"/>
</dbReference>
<dbReference type="InterPro" id="IPR037147">
    <property type="entry name" value="Ribosomal_bL28_sf"/>
</dbReference>
<dbReference type="NCBIfam" id="TIGR00009">
    <property type="entry name" value="L28"/>
    <property type="match status" value="1"/>
</dbReference>
<dbReference type="PANTHER" id="PTHR13528">
    <property type="entry name" value="39S RIBOSOMAL PROTEIN L28, MITOCHONDRIAL"/>
    <property type="match status" value="1"/>
</dbReference>
<dbReference type="PANTHER" id="PTHR13528:SF2">
    <property type="entry name" value="LARGE RIBOSOMAL SUBUNIT PROTEIN BL28M"/>
    <property type="match status" value="1"/>
</dbReference>
<dbReference type="Pfam" id="PF00830">
    <property type="entry name" value="Ribosomal_L28"/>
    <property type="match status" value="1"/>
</dbReference>
<dbReference type="SUPFAM" id="SSF143800">
    <property type="entry name" value="L28p-like"/>
    <property type="match status" value="1"/>
</dbReference>
<reference key="1">
    <citation type="journal article" date="2009" name="Proc. Natl. Acad. Sci. U.S.A.">
        <title>Hamiltonella defensa, genome evolution of protective bacterial endosymbiont from pathogenic ancestors.</title>
        <authorList>
            <person name="Degnan P.H."/>
            <person name="Yu Y."/>
            <person name="Sisneros N."/>
            <person name="Wing R.A."/>
            <person name="Moran N.A."/>
        </authorList>
    </citation>
    <scope>NUCLEOTIDE SEQUENCE [LARGE SCALE GENOMIC DNA]</scope>
    <source>
        <strain>5AT</strain>
    </source>
</reference>
<proteinExistence type="inferred from homology"/>
<protein>
    <recommendedName>
        <fullName evidence="1">Large ribosomal subunit protein bL28</fullName>
    </recommendedName>
    <alternativeName>
        <fullName evidence="2">50S ribosomal protein L28</fullName>
    </alternativeName>
</protein>
<organism>
    <name type="scientific">Hamiltonella defensa subsp. Acyrthosiphon pisum (strain 5AT)</name>
    <dbReference type="NCBI Taxonomy" id="572265"/>
    <lineage>
        <taxon>Bacteria</taxon>
        <taxon>Pseudomonadati</taxon>
        <taxon>Pseudomonadota</taxon>
        <taxon>Gammaproteobacteria</taxon>
        <taxon>Enterobacterales</taxon>
        <taxon>Enterobacteriaceae</taxon>
        <taxon>aphid secondary symbionts</taxon>
        <taxon>Candidatus Hamiltonella</taxon>
    </lineage>
</organism>
<accession>C4K7G0</accession>
<gene>
    <name evidence="1" type="primary">rpmB</name>
    <name type="ordered locus">HDEF_1914</name>
</gene>
<name>RL28_HAMD5</name>
<evidence type="ECO:0000255" key="1">
    <source>
        <dbReference type="HAMAP-Rule" id="MF_00373"/>
    </source>
</evidence>
<evidence type="ECO:0000305" key="2"/>
<feature type="chain" id="PRO_1000205602" description="Large ribosomal subunit protein bL28">
    <location>
        <begin position="1"/>
        <end position="78"/>
    </location>
</feature>
<comment type="similarity">
    <text evidence="1">Belongs to the bacterial ribosomal protein bL28 family.</text>
</comment>
<sequence length="78" mass="9259">MSRVCQVTKKRPVTGNRRSHAMNATKRRFLPNLHRHRFWIESEKRFITLRLSAKGIRIIDKKGIEAVLEEIKARGEKY</sequence>